<feature type="chain" id="PRO_0000280494" description="Multidrug resistance protein MdtH">
    <location>
        <begin position="1"/>
        <end position="411"/>
    </location>
</feature>
<feature type="transmembrane region" description="Helical" evidence="1">
    <location>
        <begin position="13"/>
        <end position="33"/>
    </location>
</feature>
<feature type="transmembrane region" description="Helical" evidence="1">
    <location>
        <begin position="45"/>
        <end position="65"/>
    </location>
</feature>
<feature type="transmembrane region" description="Helical" evidence="1">
    <location>
        <begin position="73"/>
        <end position="95"/>
    </location>
</feature>
<feature type="transmembrane region" description="Helical" evidence="1">
    <location>
        <begin position="99"/>
        <end position="116"/>
    </location>
</feature>
<feature type="transmembrane region" description="Helical" evidence="1">
    <location>
        <begin position="139"/>
        <end position="159"/>
    </location>
</feature>
<feature type="transmembrane region" description="Helical" evidence="1">
    <location>
        <begin position="165"/>
        <end position="185"/>
    </location>
</feature>
<feature type="transmembrane region" description="Helical" evidence="1">
    <location>
        <begin position="213"/>
        <end position="233"/>
    </location>
</feature>
<feature type="transmembrane region" description="Helical" evidence="1">
    <location>
        <begin position="243"/>
        <end position="263"/>
    </location>
</feature>
<feature type="transmembrane region" description="Helical" evidence="1">
    <location>
        <begin position="288"/>
        <end position="308"/>
    </location>
</feature>
<feature type="transmembrane region" description="Helical" evidence="1">
    <location>
        <begin position="340"/>
        <end position="360"/>
    </location>
</feature>
<feature type="transmembrane region" description="Helical" evidence="1">
    <location>
        <begin position="365"/>
        <end position="385"/>
    </location>
</feature>
<reference key="1">
    <citation type="journal article" date="2006" name="PLoS Biol.">
        <title>Metabolic complementarity and genomics of the dual bacterial symbiosis of sharpshooters.</title>
        <authorList>
            <person name="Wu D."/>
            <person name="Daugherty S.C."/>
            <person name="Van Aken S.E."/>
            <person name="Pai G.H."/>
            <person name="Watkins K.L."/>
            <person name="Khouri H."/>
            <person name="Tallon L.J."/>
            <person name="Zaborsky J.M."/>
            <person name="Dunbar H.E."/>
            <person name="Tran P.L."/>
            <person name="Moran N.A."/>
            <person name="Eisen J.A."/>
        </authorList>
    </citation>
    <scope>NUCLEOTIDE SEQUENCE [LARGE SCALE GENOMIC DNA]</scope>
</reference>
<name>MDTH_BAUCH</name>
<comment type="subcellular location">
    <subcellularLocation>
        <location evidence="1">Cell membrane</location>
        <topology evidence="1">Multi-pass membrane protein</topology>
    </subcellularLocation>
</comment>
<comment type="similarity">
    <text evidence="1">Belongs to the major facilitator superfamily. DHA1 family. MdtH (TC 2.A.1.2.21) subfamily.</text>
</comment>
<comment type="sequence caution" evidence="2">
    <conflict type="erroneous initiation">
        <sequence resource="EMBL-CDS" id="ABF13793"/>
    </conflict>
</comment>
<protein>
    <recommendedName>
        <fullName evidence="1">Multidrug resistance protein MdtH</fullName>
    </recommendedName>
</protein>
<accession>Q1LTM2</accession>
<sequence length="411" mass="45858">MSSVSQARSLGKYFLLMDNILVVMGFYMVFPLISIRFVDQLGWTALLVGIALGLRQFIQQGLGIFGGAFADKLGAKPMIITGMLMRALGFIFMGIADKPWLLWVSCILSALGGTLFDPPRTALVMKLTRPWERGRFYSLLMIQDSTCAMVGALLGSWLLQYNFKLVCLAGALLFLFAAILNAWLLPAYRISNAQTSMLEGIRRVLYDQRFVTYVFTLTGYYILSVQVMLILPIRVNEVAGQLAAVRWTYAIEAALSLSLLYPIARWSEKRFSLENRFMAGLTIMLLSIIPIGMIHNLQVLFLLIGIFYTGSIIAEPARETLGASLADNRARGSYMGFSRLGLALGGAIGYSGGGWLYDMGNQLDIPQLPWVMLGMIGLITLLGFYRQFHQHHYQTYSXYLSGTTKNNSYKQ</sequence>
<organism>
    <name type="scientific">Baumannia cicadellinicola subsp. Homalodisca coagulata</name>
    <dbReference type="NCBI Taxonomy" id="374463"/>
    <lineage>
        <taxon>Bacteria</taxon>
        <taxon>Pseudomonadati</taxon>
        <taxon>Pseudomonadota</taxon>
        <taxon>Gammaproteobacteria</taxon>
        <taxon>Candidatus Palibaumannia</taxon>
    </lineage>
</organism>
<keyword id="KW-1003">Cell membrane</keyword>
<keyword id="KW-0472">Membrane</keyword>
<keyword id="KW-1185">Reference proteome</keyword>
<keyword id="KW-0812">Transmembrane</keyword>
<keyword id="KW-1133">Transmembrane helix</keyword>
<keyword id="KW-0813">Transport</keyword>
<dbReference type="EMBL" id="CP000238">
    <property type="protein sequence ID" value="ABF13793.1"/>
    <property type="status" value="ALT_INIT"/>
    <property type="molecule type" value="Genomic_DNA"/>
</dbReference>
<dbReference type="RefSeq" id="WP_011520425.1">
    <property type="nucleotide sequence ID" value="NC_007984.1"/>
</dbReference>
<dbReference type="STRING" id="374463.BCI_0239"/>
<dbReference type="KEGG" id="bci:BCI_0239"/>
<dbReference type="HOGENOM" id="CLU_001265_60_2_6"/>
<dbReference type="OrthoDB" id="56516at2"/>
<dbReference type="Proteomes" id="UP000002427">
    <property type="component" value="Chromosome"/>
</dbReference>
<dbReference type="GO" id="GO:0005886">
    <property type="term" value="C:plasma membrane"/>
    <property type="evidence" value="ECO:0007669"/>
    <property type="project" value="UniProtKB-SubCell"/>
</dbReference>
<dbReference type="GO" id="GO:0022857">
    <property type="term" value="F:transmembrane transporter activity"/>
    <property type="evidence" value="ECO:0007669"/>
    <property type="project" value="UniProtKB-UniRule"/>
</dbReference>
<dbReference type="CDD" id="cd17329">
    <property type="entry name" value="MFS_MdtH_MDR_like"/>
    <property type="match status" value="1"/>
</dbReference>
<dbReference type="Gene3D" id="1.20.1250.20">
    <property type="entry name" value="MFS general substrate transporter like domains"/>
    <property type="match status" value="1"/>
</dbReference>
<dbReference type="HAMAP" id="MF_01529">
    <property type="entry name" value="MFS_MdtH"/>
    <property type="match status" value="1"/>
</dbReference>
<dbReference type="InterPro" id="IPR011701">
    <property type="entry name" value="MFS"/>
</dbReference>
<dbReference type="InterPro" id="IPR020846">
    <property type="entry name" value="MFS_dom"/>
</dbReference>
<dbReference type="InterPro" id="IPR036259">
    <property type="entry name" value="MFS_trans_sf"/>
</dbReference>
<dbReference type="InterPro" id="IPR050171">
    <property type="entry name" value="MFS_Transporters"/>
</dbReference>
<dbReference type="InterPro" id="IPR022855">
    <property type="entry name" value="Multidrug-R_MdtH"/>
</dbReference>
<dbReference type="NCBIfam" id="NF008650">
    <property type="entry name" value="PRK11646.1"/>
    <property type="match status" value="1"/>
</dbReference>
<dbReference type="PANTHER" id="PTHR23517:SF2">
    <property type="entry name" value="MULTIDRUG RESISTANCE PROTEIN MDTH"/>
    <property type="match status" value="1"/>
</dbReference>
<dbReference type="PANTHER" id="PTHR23517">
    <property type="entry name" value="RESISTANCE PROTEIN MDTM, PUTATIVE-RELATED-RELATED"/>
    <property type="match status" value="1"/>
</dbReference>
<dbReference type="Pfam" id="PF07690">
    <property type="entry name" value="MFS_1"/>
    <property type="match status" value="1"/>
</dbReference>
<dbReference type="SUPFAM" id="SSF103473">
    <property type="entry name" value="MFS general substrate transporter"/>
    <property type="match status" value="1"/>
</dbReference>
<dbReference type="PROSITE" id="PS50850">
    <property type="entry name" value="MFS"/>
    <property type="match status" value="1"/>
</dbReference>
<evidence type="ECO:0000255" key="1">
    <source>
        <dbReference type="HAMAP-Rule" id="MF_01529"/>
    </source>
</evidence>
<evidence type="ECO:0000305" key="2"/>
<proteinExistence type="inferred from homology"/>
<gene>
    <name evidence="1" type="primary">mdtH</name>
    <name type="ordered locus">BCI_0239</name>
</gene>